<comment type="function">
    <text evidence="1">Specifically methylates the guanine in position 2445 (m2G2445) and the guanine in position 2069 (m7G2069) of 23S rRNA.</text>
</comment>
<comment type="catalytic activity">
    <reaction evidence="1">
        <text>guanosine(2445) in 23S rRNA + S-adenosyl-L-methionine = N(2)-methylguanosine(2445) in 23S rRNA + S-adenosyl-L-homocysteine + H(+)</text>
        <dbReference type="Rhea" id="RHEA:42740"/>
        <dbReference type="Rhea" id="RHEA-COMP:10215"/>
        <dbReference type="Rhea" id="RHEA-COMP:10216"/>
        <dbReference type="ChEBI" id="CHEBI:15378"/>
        <dbReference type="ChEBI" id="CHEBI:57856"/>
        <dbReference type="ChEBI" id="CHEBI:59789"/>
        <dbReference type="ChEBI" id="CHEBI:74269"/>
        <dbReference type="ChEBI" id="CHEBI:74481"/>
        <dbReference type="EC" id="2.1.1.173"/>
    </reaction>
</comment>
<comment type="catalytic activity">
    <reaction evidence="1">
        <text>guanosine(2069) in 23S rRNA + S-adenosyl-L-methionine = N(2)-methylguanosine(2069) in 23S rRNA + S-adenosyl-L-homocysteine + H(+)</text>
        <dbReference type="Rhea" id="RHEA:43772"/>
        <dbReference type="Rhea" id="RHEA-COMP:10688"/>
        <dbReference type="Rhea" id="RHEA-COMP:10689"/>
        <dbReference type="ChEBI" id="CHEBI:15378"/>
        <dbReference type="ChEBI" id="CHEBI:57856"/>
        <dbReference type="ChEBI" id="CHEBI:59789"/>
        <dbReference type="ChEBI" id="CHEBI:74269"/>
        <dbReference type="ChEBI" id="CHEBI:74481"/>
        <dbReference type="EC" id="2.1.1.264"/>
    </reaction>
</comment>
<comment type="subcellular location">
    <subcellularLocation>
        <location evidence="1">Cytoplasm</location>
    </subcellularLocation>
</comment>
<comment type="similarity">
    <text evidence="1">Belongs to the methyltransferase superfamily. RlmKL family.</text>
</comment>
<sequence length="713" mass="80103">MLNFFAAAPKGFEYSLAQELTEFGATEIKESVAGVYFTAPLALAYRITLWTRLASRIVLVIYKGPCESAEQLYNAAYCIDWSAHFSNRNTFSIDFHGTGGFINNTQFGALKIKDAIVDRFRDDGDARPNVARIDADIKIDAHFRNGVITIAMNFSGPSLHQRGYRSTTGEAPLKENLAANMLVRSGWKAAPTTLLDPFCGSGTVLIEAALMAADIAPGLQRSRFGFEHWRRHDKATWHEILEEAKARASLGVKRCDVKFYGSDIDSRLVALAKRNAQNAGVFELIDFKVANALNVEPPAAEGYLITNPPYGERLGSVSELLQLYYQLGDKFKKEFGGWKVAMLCSDIELISALKLKADKQMKMFNGALECAFNLYTLHAQSTRRDTPVLPEGVDIADIAPAFANRIKKNAKQLEKWAKKEGIDSYRLYDADIPEYNVAVDRYLDHIVVQEYMAPASIPEAVTKRRLSDVLLALPAAIGVDPHKITMKTRERQKGTNQYQKLDERKLELITTEYGAKFKLNLTGYLDTGLFLDHRLTRRLVGQKSKGRRVLNLFSYTGSASVHAALGGAKSVTTVDMSNTYLAWAKENFALNDLSGKQYEFVQADCLQWIRDSAHDKSAQYDLIFIDPPTFSNSKRMEDSFDVQRDHVNLLGMLIKLLSPNGEIVFSNNKRKFKMDTDTLVKMKIKVENIDDLTLPMDYKRNPHIHNTWLITHA</sequence>
<keyword id="KW-0963">Cytoplasm</keyword>
<keyword id="KW-0489">Methyltransferase</keyword>
<keyword id="KW-0694">RNA-binding</keyword>
<keyword id="KW-0698">rRNA processing</keyword>
<keyword id="KW-0949">S-adenosyl-L-methionine</keyword>
<keyword id="KW-0808">Transferase</keyword>
<protein>
    <recommendedName>
        <fullName evidence="1">Ribosomal RNA large subunit methyltransferase K/L</fullName>
    </recommendedName>
    <domain>
        <recommendedName>
            <fullName evidence="1">23S rRNA m2G2445 methyltransferase</fullName>
            <ecNumber evidence="1">2.1.1.173</ecNumber>
        </recommendedName>
        <alternativeName>
            <fullName evidence="1">rRNA (guanine-N(2)-)-methyltransferase RlmL</fullName>
        </alternativeName>
    </domain>
    <domain>
        <recommendedName>
            <fullName evidence="1">23S rRNA m7G2069 methyltransferase</fullName>
            <ecNumber evidence="1">2.1.1.264</ecNumber>
        </recommendedName>
        <alternativeName>
            <fullName evidence="1">rRNA (guanine-N(7)-)-methyltransferase RlmK</fullName>
        </alternativeName>
    </domain>
</protein>
<gene>
    <name evidence="1" type="primary">rlmL</name>
    <name type="ordered locus">Shewana3_1601</name>
</gene>
<reference key="1">
    <citation type="submission" date="2006-09" db="EMBL/GenBank/DDBJ databases">
        <title>Complete sequence of chromosome 1 of Shewanella sp. ANA-3.</title>
        <authorList>
            <person name="Copeland A."/>
            <person name="Lucas S."/>
            <person name="Lapidus A."/>
            <person name="Barry K."/>
            <person name="Detter J.C."/>
            <person name="Glavina del Rio T."/>
            <person name="Hammon N."/>
            <person name="Israni S."/>
            <person name="Dalin E."/>
            <person name="Tice H."/>
            <person name="Pitluck S."/>
            <person name="Chertkov O."/>
            <person name="Brettin T."/>
            <person name="Bruce D."/>
            <person name="Han C."/>
            <person name="Tapia R."/>
            <person name="Gilna P."/>
            <person name="Schmutz J."/>
            <person name="Larimer F."/>
            <person name="Land M."/>
            <person name="Hauser L."/>
            <person name="Kyrpides N."/>
            <person name="Kim E."/>
            <person name="Newman D."/>
            <person name="Salticov C."/>
            <person name="Konstantinidis K."/>
            <person name="Klappenback J."/>
            <person name="Tiedje J."/>
            <person name="Richardson P."/>
        </authorList>
    </citation>
    <scope>NUCLEOTIDE SEQUENCE [LARGE SCALE GENOMIC DNA]</scope>
    <source>
        <strain>ANA-3</strain>
    </source>
</reference>
<dbReference type="EC" id="2.1.1.173" evidence="1"/>
<dbReference type="EC" id="2.1.1.264" evidence="1"/>
<dbReference type="EMBL" id="CP000469">
    <property type="protein sequence ID" value="ABK47835.1"/>
    <property type="molecule type" value="Genomic_DNA"/>
</dbReference>
<dbReference type="RefSeq" id="WP_011716642.1">
    <property type="nucleotide sequence ID" value="NC_008577.1"/>
</dbReference>
<dbReference type="SMR" id="A0KVL6"/>
<dbReference type="STRING" id="94122.Shewana3_1601"/>
<dbReference type="GeneID" id="94727595"/>
<dbReference type="KEGG" id="shn:Shewana3_1601"/>
<dbReference type="eggNOG" id="COG0116">
    <property type="taxonomic scope" value="Bacteria"/>
</dbReference>
<dbReference type="eggNOG" id="COG1092">
    <property type="taxonomic scope" value="Bacteria"/>
</dbReference>
<dbReference type="HOGENOM" id="CLU_014042_2_0_6"/>
<dbReference type="OrthoDB" id="9809404at2"/>
<dbReference type="Proteomes" id="UP000002589">
    <property type="component" value="Chromosome"/>
</dbReference>
<dbReference type="GO" id="GO:0005737">
    <property type="term" value="C:cytoplasm"/>
    <property type="evidence" value="ECO:0007669"/>
    <property type="project" value="UniProtKB-SubCell"/>
</dbReference>
<dbReference type="GO" id="GO:0052915">
    <property type="term" value="F:23S rRNA (guanine(2445)-N(2))-methyltransferase activity"/>
    <property type="evidence" value="ECO:0007669"/>
    <property type="project" value="UniProtKB-UniRule"/>
</dbReference>
<dbReference type="GO" id="GO:0003723">
    <property type="term" value="F:RNA binding"/>
    <property type="evidence" value="ECO:0007669"/>
    <property type="project" value="UniProtKB-KW"/>
</dbReference>
<dbReference type="GO" id="GO:0070043">
    <property type="term" value="F:rRNA (guanine-N7-)-methyltransferase activity"/>
    <property type="evidence" value="ECO:0007669"/>
    <property type="project" value="UniProtKB-UniRule"/>
</dbReference>
<dbReference type="CDD" id="cd02440">
    <property type="entry name" value="AdoMet_MTases"/>
    <property type="match status" value="1"/>
</dbReference>
<dbReference type="CDD" id="cd11715">
    <property type="entry name" value="THUMP_AdoMetMT"/>
    <property type="match status" value="1"/>
</dbReference>
<dbReference type="FunFam" id="3.40.50.150:FF:000039">
    <property type="entry name" value="Ribosomal RNA large subunit methyltransferase K/L"/>
    <property type="match status" value="1"/>
</dbReference>
<dbReference type="Gene3D" id="3.30.2130.30">
    <property type="match status" value="1"/>
</dbReference>
<dbReference type="Gene3D" id="3.30.750.80">
    <property type="entry name" value="RNA methyltransferase domain (HRMD) like"/>
    <property type="match status" value="1"/>
</dbReference>
<dbReference type="Gene3D" id="3.40.50.150">
    <property type="entry name" value="Vaccinia Virus protein VP39"/>
    <property type="match status" value="2"/>
</dbReference>
<dbReference type="HAMAP" id="MF_01858">
    <property type="entry name" value="23SrRNA_methyltr_KL"/>
    <property type="match status" value="1"/>
</dbReference>
<dbReference type="InterPro" id="IPR017244">
    <property type="entry name" value="23SrRNA_methyltr_KL"/>
</dbReference>
<dbReference type="InterPro" id="IPR002052">
    <property type="entry name" value="DNA_methylase_N6_adenine_CS"/>
</dbReference>
<dbReference type="InterPro" id="IPR000241">
    <property type="entry name" value="RlmKL-like_Mtase"/>
</dbReference>
<dbReference type="InterPro" id="IPR053943">
    <property type="entry name" value="RlmKL-like_Mtase_CS"/>
</dbReference>
<dbReference type="InterPro" id="IPR054170">
    <property type="entry name" value="RlmL_1st"/>
</dbReference>
<dbReference type="InterPro" id="IPR019614">
    <property type="entry name" value="SAM-dep_methyl-trfase"/>
</dbReference>
<dbReference type="InterPro" id="IPR029063">
    <property type="entry name" value="SAM-dependent_MTases_sf"/>
</dbReference>
<dbReference type="InterPro" id="IPR004114">
    <property type="entry name" value="THUMP_dom"/>
</dbReference>
<dbReference type="NCBIfam" id="NF008748">
    <property type="entry name" value="PRK11783.1"/>
    <property type="match status" value="1"/>
</dbReference>
<dbReference type="PANTHER" id="PTHR47313">
    <property type="entry name" value="RIBOSOMAL RNA LARGE SUBUNIT METHYLTRANSFERASE K/L"/>
    <property type="match status" value="1"/>
</dbReference>
<dbReference type="PANTHER" id="PTHR47313:SF1">
    <property type="entry name" value="RIBOSOMAL RNA LARGE SUBUNIT METHYLTRANSFERASE K_L"/>
    <property type="match status" value="1"/>
</dbReference>
<dbReference type="Pfam" id="PF10672">
    <property type="entry name" value="Methyltrans_SAM"/>
    <property type="match status" value="1"/>
</dbReference>
<dbReference type="Pfam" id="PF22020">
    <property type="entry name" value="RlmL_1st"/>
    <property type="match status" value="1"/>
</dbReference>
<dbReference type="Pfam" id="PF02926">
    <property type="entry name" value="THUMP"/>
    <property type="match status" value="1"/>
</dbReference>
<dbReference type="Pfam" id="PF01170">
    <property type="entry name" value="UPF0020"/>
    <property type="match status" value="1"/>
</dbReference>
<dbReference type="PIRSF" id="PIRSF037618">
    <property type="entry name" value="RNA_Mtase_bacteria_prd"/>
    <property type="match status" value="1"/>
</dbReference>
<dbReference type="SMART" id="SM00981">
    <property type="entry name" value="THUMP"/>
    <property type="match status" value="1"/>
</dbReference>
<dbReference type="SUPFAM" id="SSF53335">
    <property type="entry name" value="S-adenosyl-L-methionine-dependent methyltransferases"/>
    <property type="match status" value="2"/>
</dbReference>
<dbReference type="PROSITE" id="PS51165">
    <property type="entry name" value="THUMP"/>
    <property type="match status" value="1"/>
</dbReference>
<dbReference type="PROSITE" id="PS01261">
    <property type="entry name" value="UPF0020"/>
    <property type="match status" value="1"/>
</dbReference>
<feature type="chain" id="PRO_0000366831" description="Ribosomal RNA large subunit methyltransferase K/L">
    <location>
        <begin position="1"/>
        <end position="713"/>
    </location>
</feature>
<feature type="domain" description="THUMP" evidence="1">
    <location>
        <begin position="43"/>
        <end position="154"/>
    </location>
</feature>
<proteinExistence type="inferred from homology"/>
<organism>
    <name type="scientific">Shewanella sp. (strain ANA-3)</name>
    <dbReference type="NCBI Taxonomy" id="94122"/>
    <lineage>
        <taxon>Bacteria</taxon>
        <taxon>Pseudomonadati</taxon>
        <taxon>Pseudomonadota</taxon>
        <taxon>Gammaproteobacteria</taxon>
        <taxon>Alteromonadales</taxon>
        <taxon>Shewanellaceae</taxon>
        <taxon>Shewanella</taxon>
    </lineage>
</organism>
<accession>A0KVL6</accession>
<name>RLMKL_SHESA</name>
<evidence type="ECO:0000255" key="1">
    <source>
        <dbReference type="HAMAP-Rule" id="MF_01858"/>
    </source>
</evidence>